<keyword id="KW-0903">Direct protein sequencing</keyword>
<keyword id="KW-1015">Disulfide bond</keyword>
<keyword id="KW-0393">Immunoglobulin domain</keyword>
<keyword id="KW-1185">Reference proteome</keyword>
<feature type="chain" id="PRO_0000153614" description="Ig lambda chain C region">
    <location>
        <begin position="1" status="less than"/>
        <end position="105"/>
    </location>
</feature>
<feature type="domain" description="Ig-like">
    <location>
        <begin position="6"/>
        <end position="100"/>
    </location>
</feature>
<feature type="disulfide bond">
    <location>
        <begin position="27"/>
        <end position="86"/>
    </location>
</feature>
<feature type="disulfide bond" description="Interchain (with heavy chain)">
    <location>
        <position position="104"/>
    </location>
</feature>
<feature type="non-terminal residue">
    <location>
        <position position="1"/>
    </location>
</feature>
<comment type="miscellaneous">
    <text>This lambda chain expresses the c7 allotypic specificity.</text>
</comment>
<proteinExistence type="evidence at protein level"/>
<sequence>QPAVTPSVILFPPSSEELKDNKATLVCLISDFYPRTVKVNWKADGNSVTQGVDTTQPSKQSNNKYAASSFLHLTANQWKSYQSVTCQVTHEGHTVEKSLAPAECS</sequence>
<name>LAC_RABIT</name>
<protein>
    <recommendedName>
        <fullName>Ig lambda chain C region</fullName>
    </recommendedName>
</protein>
<reference key="1">
    <citation type="journal article" date="1981" name="Biochem. J.">
        <title>The primary structure of the constant region of Basilea-rabbit immunoglobulin lambda-chains.</title>
        <authorList>
            <person name="Garcia I."/>
            <person name="Jaton J.-C."/>
        </authorList>
    </citation>
    <scope>PROTEIN SEQUENCE</scope>
</reference>
<dbReference type="PIR" id="A02130">
    <property type="entry name" value="L7RB"/>
</dbReference>
<dbReference type="SMR" id="P01847"/>
<dbReference type="FunCoup" id="P01847">
    <property type="interactions" value="166"/>
</dbReference>
<dbReference type="STRING" id="9986.ENSOCUP00000010579"/>
<dbReference type="PaxDb" id="9986-ENSOCUP00000017529"/>
<dbReference type="eggNOG" id="ENOG502RYIN">
    <property type="taxonomic scope" value="Eukaryota"/>
</dbReference>
<dbReference type="InParanoid" id="P01847"/>
<dbReference type="Proteomes" id="UP000001811">
    <property type="component" value="Unplaced"/>
</dbReference>
<dbReference type="CDD" id="cd07699">
    <property type="entry name" value="IgC1_L"/>
    <property type="match status" value="1"/>
</dbReference>
<dbReference type="FunFam" id="2.60.40.10:FF:000283">
    <property type="entry name" value="Immunoglobulin kappa constant"/>
    <property type="match status" value="1"/>
</dbReference>
<dbReference type="Gene3D" id="2.60.40.10">
    <property type="entry name" value="Immunoglobulins"/>
    <property type="match status" value="1"/>
</dbReference>
<dbReference type="InterPro" id="IPR007110">
    <property type="entry name" value="Ig-like_dom"/>
</dbReference>
<dbReference type="InterPro" id="IPR036179">
    <property type="entry name" value="Ig-like_dom_sf"/>
</dbReference>
<dbReference type="InterPro" id="IPR013783">
    <property type="entry name" value="Ig-like_fold"/>
</dbReference>
<dbReference type="InterPro" id="IPR003597">
    <property type="entry name" value="Ig_C1-set"/>
</dbReference>
<dbReference type="InterPro" id="IPR050160">
    <property type="entry name" value="MHC/Immunoglobulin"/>
</dbReference>
<dbReference type="PANTHER" id="PTHR19944:SF98">
    <property type="entry name" value="IG-LIKE DOMAIN-CONTAINING PROTEIN"/>
    <property type="match status" value="1"/>
</dbReference>
<dbReference type="PANTHER" id="PTHR19944">
    <property type="entry name" value="MHC CLASS II-RELATED"/>
    <property type="match status" value="1"/>
</dbReference>
<dbReference type="Pfam" id="PF07654">
    <property type="entry name" value="C1-set"/>
    <property type="match status" value="1"/>
</dbReference>
<dbReference type="SMART" id="SM00407">
    <property type="entry name" value="IGc1"/>
    <property type="match status" value="1"/>
</dbReference>
<dbReference type="SUPFAM" id="SSF48726">
    <property type="entry name" value="Immunoglobulin"/>
    <property type="match status" value="1"/>
</dbReference>
<dbReference type="PROSITE" id="PS50835">
    <property type="entry name" value="IG_LIKE"/>
    <property type="match status" value="1"/>
</dbReference>
<organism>
    <name type="scientific">Oryctolagus cuniculus</name>
    <name type="common">Rabbit</name>
    <dbReference type="NCBI Taxonomy" id="9986"/>
    <lineage>
        <taxon>Eukaryota</taxon>
        <taxon>Metazoa</taxon>
        <taxon>Chordata</taxon>
        <taxon>Craniata</taxon>
        <taxon>Vertebrata</taxon>
        <taxon>Euteleostomi</taxon>
        <taxon>Mammalia</taxon>
        <taxon>Eutheria</taxon>
        <taxon>Euarchontoglires</taxon>
        <taxon>Glires</taxon>
        <taxon>Lagomorpha</taxon>
        <taxon>Leporidae</taxon>
        <taxon>Oryctolagus</taxon>
    </lineage>
</organism>
<accession>P01847</accession>